<feature type="chain" id="PRO_0000387622" description="Acetaldehyde dehydrogenase 4">
    <location>
        <begin position="1"/>
        <end position="312"/>
    </location>
</feature>
<feature type="active site" description="Acyl-thioester intermediate" evidence="1">
    <location>
        <position position="132"/>
    </location>
</feature>
<feature type="binding site" evidence="1">
    <location>
        <begin position="12"/>
        <end position="15"/>
    </location>
    <ligand>
        <name>NAD(+)</name>
        <dbReference type="ChEBI" id="CHEBI:57540"/>
    </ligand>
</feature>
<feature type="binding site" evidence="1">
    <location>
        <begin position="163"/>
        <end position="171"/>
    </location>
    <ligand>
        <name>NAD(+)</name>
        <dbReference type="ChEBI" id="CHEBI:57540"/>
    </ligand>
</feature>
<feature type="binding site" evidence="1">
    <location>
        <position position="290"/>
    </location>
    <ligand>
        <name>NAD(+)</name>
        <dbReference type="ChEBI" id="CHEBI:57540"/>
    </ligand>
</feature>
<protein>
    <recommendedName>
        <fullName evidence="1">Acetaldehyde dehydrogenase 4</fullName>
        <ecNumber evidence="1">1.2.1.10</ecNumber>
    </recommendedName>
    <alternativeName>
        <fullName evidence="1">Acetaldehyde dehydrogenase [acetylating] 4</fullName>
    </alternativeName>
</protein>
<keyword id="KW-0058">Aromatic hydrocarbons catabolism</keyword>
<keyword id="KW-0520">NAD</keyword>
<keyword id="KW-0560">Oxidoreductase</keyword>
<sequence length="312" mass="32771">MTKKLKVAIVGSGNIGTDLMIKILRHGQHLEMGALVGIDPNSDGLARAARLGVATTAEGVEGLARLPGFGEIDFVFDATSAGAHVRNEAFLRALKPGLRLIDLTPAAIGPYCVPVVNLEQNLHETNVNMVTCGGQATIPMVAAVSRVARVHYAEIVASIASRSAGPGTRANIDEFTETTSKAIEAIGGARKGKAIIVLNPAEPPLIMRDTVYVLSAPADRARVEASLAEMAQAVQGYVPGYRLKQRVQFDEIPDAAPLNIPGLGRLSGLKTSVFLEVEGAAHYLPAYAGNLDIMTSAALATAERMAQSMLNA</sequence>
<dbReference type="EC" id="1.2.1.10" evidence="1"/>
<dbReference type="EMBL" id="CP001157">
    <property type="protein sequence ID" value="ACO80340.1"/>
    <property type="molecule type" value="Genomic_DNA"/>
</dbReference>
<dbReference type="RefSeq" id="WP_012702708.1">
    <property type="nucleotide sequence ID" value="NC_012560.1"/>
</dbReference>
<dbReference type="SMR" id="C1DF11"/>
<dbReference type="STRING" id="322710.Avin_42130"/>
<dbReference type="EnsemblBacteria" id="ACO80340">
    <property type="protein sequence ID" value="ACO80340"/>
    <property type="gene ID" value="Avin_42130"/>
</dbReference>
<dbReference type="GeneID" id="88187128"/>
<dbReference type="KEGG" id="avn:Avin_42130"/>
<dbReference type="eggNOG" id="COG4569">
    <property type="taxonomic scope" value="Bacteria"/>
</dbReference>
<dbReference type="HOGENOM" id="CLU_062208_0_0_6"/>
<dbReference type="OrthoDB" id="9786743at2"/>
<dbReference type="Proteomes" id="UP000002424">
    <property type="component" value="Chromosome"/>
</dbReference>
<dbReference type="GO" id="GO:0008774">
    <property type="term" value="F:acetaldehyde dehydrogenase (acetylating) activity"/>
    <property type="evidence" value="ECO:0007669"/>
    <property type="project" value="UniProtKB-UniRule"/>
</dbReference>
<dbReference type="GO" id="GO:0051287">
    <property type="term" value="F:NAD binding"/>
    <property type="evidence" value="ECO:0007669"/>
    <property type="project" value="UniProtKB-UniRule"/>
</dbReference>
<dbReference type="GO" id="GO:0009056">
    <property type="term" value="P:catabolic process"/>
    <property type="evidence" value="ECO:0007669"/>
    <property type="project" value="UniProtKB-KW"/>
</dbReference>
<dbReference type="CDD" id="cd23933">
    <property type="entry name" value="ALDH_C"/>
    <property type="match status" value="1"/>
</dbReference>
<dbReference type="Gene3D" id="3.30.360.10">
    <property type="entry name" value="Dihydrodipicolinate Reductase, domain 2"/>
    <property type="match status" value="1"/>
</dbReference>
<dbReference type="Gene3D" id="3.40.50.720">
    <property type="entry name" value="NAD(P)-binding Rossmann-like Domain"/>
    <property type="match status" value="1"/>
</dbReference>
<dbReference type="HAMAP" id="MF_01657">
    <property type="entry name" value="Ac_ald_DH_ac"/>
    <property type="match status" value="1"/>
</dbReference>
<dbReference type="InterPro" id="IPR003361">
    <property type="entry name" value="Acetaldehyde_dehydrogenase"/>
</dbReference>
<dbReference type="InterPro" id="IPR015426">
    <property type="entry name" value="Acetylaldehyde_DH_C"/>
</dbReference>
<dbReference type="InterPro" id="IPR036291">
    <property type="entry name" value="NAD(P)-bd_dom_sf"/>
</dbReference>
<dbReference type="InterPro" id="IPR000534">
    <property type="entry name" value="Semialdehyde_DH_NAD-bd"/>
</dbReference>
<dbReference type="NCBIfam" id="TIGR03215">
    <property type="entry name" value="ac_ald_DH_ac"/>
    <property type="match status" value="1"/>
</dbReference>
<dbReference type="NCBIfam" id="NF006157">
    <property type="entry name" value="PRK08300.1"/>
    <property type="match status" value="1"/>
</dbReference>
<dbReference type="Pfam" id="PF09290">
    <property type="entry name" value="AcetDehyd-dimer"/>
    <property type="match status" value="1"/>
</dbReference>
<dbReference type="Pfam" id="PF01118">
    <property type="entry name" value="Semialdhyde_dh"/>
    <property type="match status" value="1"/>
</dbReference>
<dbReference type="PIRSF" id="PIRSF015689">
    <property type="entry name" value="Actaldh_dh_actl"/>
    <property type="match status" value="1"/>
</dbReference>
<dbReference type="SMART" id="SM00859">
    <property type="entry name" value="Semialdhyde_dh"/>
    <property type="match status" value="1"/>
</dbReference>
<dbReference type="SUPFAM" id="SSF55347">
    <property type="entry name" value="Glyceraldehyde-3-phosphate dehydrogenase-like, C-terminal domain"/>
    <property type="match status" value="1"/>
</dbReference>
<dbReference type="SUPFAM" id="SSF51735">
    <property type="entry name" value="NAD(P)-binding Rossmann-fold domains"/>
    <property type="match status" value="1"/>
</dbReference>
<accession>C1DF11</accession>
<evidence type="ECO:0000255" key="1">
    <source>
        <dbReference type="HAMAP-Rule" id="MF_01657"/>
    </source>
</evidence>
<comment type="catalytic activity">
    <reaction evidence="1">
        <text>acetaldehyde + NAD(+) + CoA = acetyl-CoA + NADH + H(+)</text>
        <dbReference type="Rhea" id="RHEA:23288"/>
        <dbReference type="ChEBI" id="CHEBI:15343"/>
        <dbReference type="ChEBI" id="CHEBI:15378"/>
        <dbReference type="ChEBI" id="CHEBI:57287"/>
        <dbReference type="ChEBI" id="CHEBI:57288"/>
        <dbReference type="ChEBI" id="CHEBI:57540"/>
        <dbReference type="ChEBI" id="CHEBI:57945"/>
        <dbReference type="EC" id="1.2.1.10"/>
    </reaction>
</comment>
<comment type="similarity">
    <text evidence="1">Belongs to the acetaldehyde dehydrogenase family.</text>
</comment>
<gene>
    <name type="ordered locus">Avin_42130</name>
</gene>
<name>ACDH4_AZOVD</name>
<reference key="1">
    <citation type="journal article" date="2009" name="J. Bacteriol.">
        <title>Genome sequence of Azotobacter vinelandii, an obligate aerobe specialized to support diverse anaerobic metabolic processes.</title>
        <authorList>
            <person name="Setubal J.C."/>
            <person name="Dos Santos P."/>
            <person name="Goldman B.S."/>
            <person name="Ertesvaag H."/>
            <person name="Espin G."/>
            <person name="Rubio L.M."/>
            <person name="Valla S."/>
            <person name="Almeida N.F."/>
            <person name="Balasubramanian D."/>
            <person name="Cromes L."/>
            <person name="Curatti L."/>
            <person name="Du Z."/>
            <person name="Godsy E."/>
            <person name="Goodner B."/>
            <person name="Hellner-Burris K."/>
            <person name="Hernandez J.A."/>
            <person name="Houmiel K."/>
            <person name="Imperial J."/>
            <person name="Kennedy C."/>
            <person name="Larson T.J."/>
            <person name="Latreille P."/>
            <person name="Ligon L.S."/>
            <person name="Lu J."/>
            <person name="Maerk M."/>
            <person name="Miller N.M."/>
            <person name="Norton S."/>
            <person name="O'Carroll I.P."/>
            <person name="Paulsen I."/>
            <person name="Raulfs E.C."/>
            <person name="Roemer R."/>
            <person name="Rosser J."/>
            <person name="Segura D."/>
            <person name="Slater S."/>
            <person name="Stricklin S.L."/>
            <person name="Studholme D.J."/>
            <person name="Sun J."/>
            <person name="Viana C.J."/>
            <person name="Wallin E."/>
            <person name="Wang B."/>
            <person name="Wheeler C."/>
            <person name="Zhu H."/>
            <person name="Dean D.R."/>
            <person name="Dixon R."/>
            <person name="Wood D."/>
        </authorList>
    </citation>
    <scope>NUCLEOTIDE SEQUENCE [LARGE SCALE GENOMIC DNA]</scope>
    <source>
        <strain>DJ / ATCC BAA-1303</strain>
    </source>
</reference>
<organism>
    <name type="scientific">Azotobacter vinelandii (strain DJ / ATCC BAA-1303)</name>
    <dbReference type="NCBI Taxonomy" id="322710"/>
    <lineage>
        <taxon>Bacteria</taxon>
        <taxon>Pseudomonadati</taxon>
        <taxon>Pseudomonadota</taxon>
        <taxon>Gammaproteobacteria</taxon>
        <taxon>Pseudomonadales</taxon>
        <taxon>Pseudomonadaceae</taxon>
        <taxon>Azotobacter</taxon>
    </lineage>
</organism>
<proteinExistence type="inferred from homology"/>